<sequence>MKTTFLDFEQPIAELEAKIEELRFVQDDSAVDISEEIERLSKKSQQLTKDLYANLSPWQVSQIARHPQRPYTLDYVAELFTDFHELHGDRAFADDLSIVGGLARFGGHPCMVIGHQKGRDTKERAARNFGMPRPEGYRKAERLMRLAEKFGLPIFTFVDTPGAYPGIGAEERGQSEAIGRNLYVMAELKTPIITTVIGEGGSGGALAIAVADTVMMLQFSTYSVISPEGCASILWKSAAKAPEAAEALGLTAHRLKALGLIDKIINEPLGGAHRDPKGMAALLRRALADSLRQFQGMSIDALRERRFERLMAYGKFKETTPGA</sequence>
<dbReference type="EC" id="2.1.3.15" evidence="1"/>
<dbReference type="EMBL" id="CP000440">
    <property type="protein sequence ID" value="ABI87667.1"/>
    <property type="molecule type" value="Genomic_DNA"/>
</dbReference>
<dbReference type="RefSeq" id="WP_006478433.1">
    <property type="nucleotide sequence ID" value="NZ_CP009798.1"/>
</dbReference>
<dbReference type="SMR" id="Q0BDV6"/>
<dbReference type="KEGG" id="bam:Bamb_2111"/>
<dbReference type="PATRIC" id="fig|339670.21.peg.2825"/>
<dbReference type="eggNOG" id="COG0825">
    <property type="taxonomic scope" value="Bacteria"/>
</dbReference>
<dbReference type="UniPathway" id="UPA00655">
    <property type="reaction ID" value="UER00711"/>
</dbReference>
<dbReference type="Proteomes" id="UP000000662">
    <property type="component" value="Chromosome 1"/>
</dbReference>
<dbReference type="GO" id="GO:0009317">
    <property type="term" value="C:acetyl-CoA carboxylase complex"/>
    <property type="evidence" value="ECO:0007669"/>
    <property type="project" value="InterPro"/>
</dbReference>
<dbReference type="GO" id="GO:0003989">
    <property type="term" value="F:acetyl-CoA carboxylase activity"/>
    <property type="evidence" value="ECO:0007669"/>
    <property type="project" value="InterPro"/>
</dbReference>
<dbReference type="GO" id="GO:0005524">
    <property type="term" value="F:ATP binding"/>
    <property type="evidence" value="ECO:0007669"/>
    <property type="project" value="UniProtKB-KW"/>
</dbReference>
<dbReference type="GO" id="GO:0016743">
    <property type="term" value="F:carboxyl- or carbamoyltransferase activity"/>
    <property type="evidence" value="ECO:0007669"/>
    <property type="project" value="UniProtKB-UniRule"/>
</dbReference>
<dbReference type="GO" id="GO:0006633">
    <property type="term" value="P:fatty acid biosynthetic process"/>
    <property type="evidence" value="ECO:0007669"/>
    <property type="project" value="UniProtKB-KW"/>
</dbReference>
<dbReference type="GO" id="GO:2001295">
    <property type="term" value="P:malonyl-CoA biosynthetic process"/>
    <property type="evidence" value="ECO:0007669"/>
    <property type="project" value="UniProtKB-UniRule"/>
</dbReference>
<dbReference type="Gene3D" id="3.90.226.10">
    <property type="entry name" value="2-enoyl-CoA Hydratase, Chain A, domain 1"/>
    <property type="match status" value="1"/>
</dbReference>
<dbReference type="HAMAP" id="MF_00823">
    <property type="entry name" value="AcetylCoA_CT_alpha"/>
    <property type="match status" value="1"/>
</dbReference>
<dbReference type="InterPro" id="IPR001095">
    <property type="entry name" value="Acetyl_CoA_COase_a_su"/>
</dbReference>
<dbReference type="InterPro" id="IPR029045">
    <property type="entry name" value="ClpP/crotonase-like_dom_sf"/>
</dbReference>
<dbReference type="InterPro" id="IPR011763">
    <property type="entry name" value="COA_CT_C"/>
</dbReference>
<dbReference type="NCBIfam" id="TIGR00513">
    <property type="entry name" value="accA"/>
    <property type="match status" value="1"/>
</dbReference>
<dbReference type="NCBIfam" id="NF041504">
    <property type="entry name" value="AccA_sub"/>
    <property type="match status" value="1"/>
</dbReference>
<dbReference type="NCBIfam" id="NF004344">
    <property type="entry name" value="PRK05724.1"/>
    <property type="match status" value="1"/>
</dbReference>
<dbReference type="PANTHER" id="PTHR42853">
    <property type="entry name" value="ACETYL-COENZYME A CARBOXYLASE CARBOXYL TRANSFERASE SUBUNIT ALPHA"/>
    <property type="match status" value="1"/>
</dbReference>
<dbReference type="PANTHER" id="PTHR42853:SF3">
    <property type="entry name" value="ACETYL-COENZYME A CARBOXYLASE CARBOXYL TRANSFERASE SUBUNIT ALPHA, CHLOROPLASTIC"/>
    <property type="match status" value="1"/>
</dbReference>
<dbReference type="Pfam" id="PF03255">
    <property type="entry name" value="ACCA"/>
    <property type="match status" value="1"/>
</dbReference>
<dbReference type="PRINTS" id="PR01069">
    <property type="entry name" value="ACCCTRFRASEA"/>
</dbReference>
<dbReference type="SUPFAM" id="SSF52096">
    <property type="entry name" value="ClpP/crotonase"/>
    <property type="match status" value="1"/>
</dbReference>
<dbReference type="PROSITE" id="PS50989">
    <property type="entry name" value="COA_CT_CTER"/>
    <property type="match status" value="1"/>
</dbReference>
<proteinExistence type="inferred from homology"/>
<accession>Q0BDV6</accession>
<feature type="chain" id="PRO_1000062587" description="Acetyl-coenzyme A carboxylase carboxyl transferase subunit alpha">
    <location>
        <begin position="1"/>
        <end position="323"/>
    </location>
</feature>
<feature type="domain" description="CoA carboxyltransferase C-terminal" evidence="2">
    <location>
        <begin position="39"/>
        <end position="293"/>
    </location>
</feature>
<protein>
    <recommendedName>
        <fullName evidence="1">Acetyl-coenzyme A carboxylase carboxyl transferase subunit alpha</fullName>
        <shortName evidence="1">ACCase subunit alpha</shortName>
        <shortName evidence="1">Acetyl-CoA carboxylase carboxyltransferase subunit alpha</shortName>
        <ecNumber evidence="1">2.1.3.15</ecNumber>
    </recommendedName>
</protein>
<gene>
    <name evidence="1" type="primary">accA</name>
    <name type="ordered locus">Bamb_2111</name>
</gene>
<keyword id="KW-0067">ATP-binding</keyword>
<keyword id="KW-0963">Cytoplasm</keyword>
<keyword id="KW-0275">Fatty acid biosynthesis</keyword>
<keyword id="KW-0276">Fatty acid metabolism</keyword>
<keyword id="KW-0444">Lipid biosynthesis</keyword>
<keyword id="KW-0443">Lipid metabolism</keyword>
<keyword id="KW-0547">Nucleotide-binding</keyword>
<keyword id="KW-0808">Transferase</keyword>
<reference key="1">
    <citation type="submission" date="2006-08" db="EMBL/GenBank/DDBJ databases">
        <title>Complete sequence of chromosome 1 of Burkholderia cepacia AMMD.</title>
        <authorList>
            <person name="Copeland A."/>
            <person name="Lucas S."/>
            <person name="Lapidus A."/>
            <person name="Barry K."/>
            <person name="Detter J.C."/>
            <person name="Glavina del Rio T."/>
            <person name="Hammon N."/>
            <person name="Israni S."/>
            <person name="Pitluck S."/>
            <person name="Bruce D."/>
            <person name="Chain P."/>
            <person name="Malfatti S."/>
            <person name="Shin M."/>
            <person name="Vergez L."/>
            <person name="Schmutz J."/>
            <person name="Larimer F."/>
            <person name="Land M."/>
            <person name="Hauser L."/>
            <person name="Kyrpides N."/>
            <person name="Kim E."/>
            <person name="Parke J."/>
            <person name="Coenye T."/>
            <person name="Konstantinidis K."/>
            <person name="Ramette A."/>
            <person name="Tiedje J."/>
            <person name="Richardson P."/>
        </authorList>
    </citation>
    <scope>NUCLEOTIDE SEQUENCE [LARGE SCALE GENOMIC DNA]</scope>
    <source>
        <strain>ATCC BAA-244 / DSM 16087 / CCUG 44356 / LMG 19182 / AMMD</strain>
    </source>
</reference>
<comment type="function">
    <text evidence="1">Component of the acetyl coenzyme A carboxylase (ACC) complex. First, biotin carboxylase catalyzes the carboxylation of biotin on its carrier protein (BCCP) and then the CO(2) group is transferred by the carboxyltransferase to acetyl-CoA to form malonyl-CoA.</text>
</comment>
<comment type="catalytic activity">
    <reaction evidence="1">
        <text>N(6)-carboxybiotinyl-L-lysyl-[protein] + acetyl-CoA = N(6)-biotinyl-L-lysyl-[protein] + malonyl-CoA</text>
        <dbReference type="Rhea" id="RHEA:54728"/>
        <dbReference type="Rhea" id="RHEA-COMP:10505"/>
        <dbReference type="Rhea" id="RHEA-COMP:10506"/>
        <dbReference type="ChEBI" id="CHEBI:57288"/>
        <dbReference type="ChEBI" id="CHEBI:57384"/>
        <dbReference type="ChEBI" id="CHEBI:83144"/>
        <dbReference type="ChEBI" id="CHEBI:83145"/>
        <dbReference type="EC" id="2.1.3.15"/>
    </reaction>
</comment>
<comment type="pathway">
    <text evidence="1">Lipid metabolism; malonyl-CoA biosynthesis; malonyl-CoA from acetyl-CoA: step 1/1.</text>
</comment>
<comment type="subunit">
    <text evidence="1">Acetyl-CoA carboxylase is a heterohexamer composed of biotin carboxyl carrier protein (AccB), biotin carboxylase (AccC) and two subunits each of ACCase subunit alpha (AccA) and ACCase subunit beta (AccD).</text>
</comment>
<comment type="subcellular location">
    <subcellularLocation>
        <location evidence="1">Cytoplasm</location>
    </subcellularLocation>
</comment>
<comment type="similarity">
    <text evidence="1">Belongs to the AccA family.</text>
</comment>
<organism>
    <name type="scientific">Burkholderia ambifaria (strain ATCC BAA-244 / DSM 16087 / CCUG 44356 / LMG 19182 / AMMD)</name>
    <name type="common">Burkholderia cepacia (strain AMMD)</name>
    <dbReference type="NCBI Taxonomy" id="339670"/>
    <lineage>
        <taxon>Bacteria</taxon>
        <taxon>Pseudomonadati</taxon>
        <taxon>Pseudomonadota</taxon>
        <taxon>Betaproteobacteria</taxon>
        <taxon>Burkholderiales</taxon>
        <taxon>Burkholderiaceae</taxon>
        <taxon>Burkholderia</taxon>
        <taxon>Burkholderia cepacia complex</taxon>
    </lineage>
</organism>
<evidence type="ECO:0000255" key="1">
    <source>
        <dbReference type="HAMAP-Rule" id="MF_00823"/>
    </source>
</evidence>
<evidence type="ECO:0000255" key="2">
    <source>
        <dbReference type="PROSITE-ProRule" id="PRU01137"/>
    </source>
</evidence>
<name>ACCA_BURCM</name>